<accession>Q32IJ5</accession>
<evidence type="ECO:0000255" key="1">
    <source>
        <dbReference type="HAMAP-Rule" id="MF_01923"/>
    </source>
</evidence>
<reference key="1">
    <citation type="journal article" date="2005" name="Nucleic Acids Res.">
        <title>Genome dynamics and diversity of Shigella species, the etiologic agents of bacillary dysentery.</title>
        <authorList>
            <person name="Yang F."/>
            <person name="Yang J."/>
            <person name="Zhang X."/>
            <person name="Chen L."/>
            <person name="Jiang Y."/>
            <person name="Yan Y."/>
            <person name="Tang X."/>
            <person name="Wang J."/>
            <person name="Xiong Z."/>
            <person name="Dong J."/>
            <person name="Xue Y."/>
            <person name="Zhu Y."/>
            <person name="Xu X."/>
            <person name="Sun L."/>
            <person name="Chen S."/>
            <person name="Nie H."/>
            <person name="Peng J."/>
            <person name="Xu J."/>
            <person name="Wang Y."/>
            <person name="Yuan Z."/>
            <person name="Wen Y."/>
            <person name="Yao Z."/>
            <person name="Shen Y."/>
            <person name="Qiang B."/>
            <person name="Hou Y."/>
            <person name="Yu J."/>
            <person name="Jin Q."/>
        </authorList>
    </citation>
    <scope>NUCLEOTIDE SEQUENCE [LARGE SCALE GENOMIC DNA]</scope>
    <source>
        <strain>Sd197</strain>
    </source>
</reference>
<comment type="function">
    <text evidence="1">Catalyzes the carbon skeleton rearrangement of L-glutamate to L-threo-3-methylaspartate ((2S,3S)-3-methylaspartate).</text>
</comment>
<comment type="catalytic activity">
    <reaction evidence="1">
        <text>(2S,3S)-3-methyl-L-aspartate = L-glutamate</text>
        <dbReference type="Rhea" id="RHEA:12857"/>
        <dbReference type="ChEBI" id="CHEBI:29985"/>
        <dbReference type="ChEBI" id="CHEBI:58724"/>
        <dbReference type="EC" id="5.4.99.1"/>
    </reaction>
</comment>
<comment type="cofactor">
    <cofactor evidence="1">
        <name>adenosylcob(III)alamin</name>
        <dbReference type="ChEBI" id="CHEBI:18408"/>
    </cofactor>
</comment>
<comment type="pathway">
    <text evidence="1">Amino-acid degradation; L-glutamate degradation via mesaconate pathway; acetate and pyruvate from L-glutamate: step 1/4.</text>
</comment>
<comment type="subunit">
    <text evidence="1">Heterotetramer composed of 2 epsilon subunits (GlmE) and 2 sigma subunits (GlmS). GlmE exists as a homodimer and GlmS as a monomer.</text>
</comment>
<comment type="similarity">
    <text evidence="1">Belongs to the methylaspartate mutase GlmE subunit family.</text>
</comment>
<gene>
    <name evidence="1" type="primary">glmE</name>
    <name type="ordered locus">SDY_0674</name>
</gene>
<proteinExistence type="inferred from homology"/>
<name>GLME_SHIDS</name>
<feature type="chain" id="PRO_0000429445" description="Glutamate mutase epsilon subunit">
    <location>
        <begin position="1"/>
        <end position="454"/>
    </location>
</feature>
<feature type="binding site" evidence="1">
    <location>
        <position position="67"/>
    </location>
    <ligand>
        <name>L-glutamate</name>
        <dbReference type="ChEBI" id="CHEBI:29985"/>
    </ligand>
</feature>
<feature type="binding site" evidence="1">
    <location>
        <position position="69"/>
    </location>
    <ligand>
        <name>adenosylcob(III)alamin</name>
        <dbReference type="ChEBI" id="CHEBI:18408"/>
    </ligand>
</feature>
<feature type="binding site" evidence="1">
    <location>
        <position position="99"/>
    </location>
    <ligand>
        <name>L-glutamate</name>
        <dbReference type="ChEBI" id="CHEBI:29985"/>
    </ligand>
</feature>
<feature type="binding site" evidence="1">
    <location>
        <position position="122"/>
    </location>
    <ligand>
        <name>adenosylcob(III)alamin</name>
        <dbReference type="ChEBI" id="CHEBI:18408"/>
    </ligand>
</feature>
<feature type="binding site" evidence="1">
    <location>
        <begin position="148"/>
        <end position="149"/>
    </location>
    <ligand>
        <name>L-glutamate</name>
        <dbReference type="ChEBI" id="CHEBI:29985"/>
    </ligand>
</feature>
<feature type="binding site" evidence="1">
    <location>
        <position position="170"/>
    </location>
    <ligand>
        <name>L-glutamate</name>
        <dbReference type="ChEBI" id="CHEBI:29985"/>
    </ligand>
</feature>
<feature type="binding site" evidence="1">
    <location>
        <position position="176"/>
    </location>
    <ligand>
        <name>L-glutamate</name>
        <dbReference type="ChEBI" id="CHEBI:29985"/>
    </ligand>
</feature>
<feature type="binding site" evidence="1">
    <location>
        <position position="179"/>
    </location>
    <ligand>
        <name>adenosylcob(III)alamin</name>
        <dbReference type="ChEBI" id="CHEBI:18408"/>
    </ligand>
</feature>
<feature type="binding site" evidence="1">
    <location>
        <position position="180"/>
    </location>
    <ligand>
        <name>L-glutamate</name>
        <dbReference type="ChEBI" id="CHEBI:29985"/>
    </ligand>
</feature>
<feature type="binding site" evidence="1">
    <location>
        <position position="296"/>
    </location>
    <ligand>
        <name>adenosylcob(III)alamin</name>
        <dbReference type="ChEBI" id="CHEBI:18408"/>
    </ligand>
</feature>
<feature type="binding site" evidence="1">
    <location>
        <position position="325"/>
    </location>
    <ligand>
        <name>adenosylcob(III)alamin</name>
        <dbReference type="ChEBI" id="CHEBI:18408"/>
    </ligand>
</feature>
<feature type="binding site" evidence="1">
    <location>
        <position position="329"/>
    </location>
    <ligand>
        <name>adenosylcob(III)alamin</name>
        <dbReference type="ChEBI" id="CHEBI:18408"/>
    </ligand>
</feature>
<feature type="binding site" evidence="1">
    <location>
        <position position="333"/>
    </location>
    <ligand>
        <name>adenosylcob(III)alamin</name>
        <dbReference type="ChEBI" id="CHEBI:18408"/>
    </ligand>
</feature>
<dbReference type="EC" id="5.4.99.1" evidence="1"/>
<dbReference type="EMBL" id="CP000034">
    <property type="protein sequence ID" value="ABB60862.1"/>
    <property type="molecule type" value="Genomic_DNA"/>
</dbReference>
<dbReference type="RefSeq" id="WP_000423331.1">
    <property type="nucleotide sequence ID" value="NC_007606.1"/>
</dbReference>
<dbReference type="RefSeq" id="YP_402351.1">
    <property type="nucleotide sequence ID" value="NC_007606.1"/>
</dbReference>
<dbReference type="SMR" id="Q32IJ5"/>
<dbReference type="STRING" id="300267.SDY_0674"/>
<dbReference type="EnsemblBacteria" id="ABB60862">
    <property type="protein sequence ID" value="ABB60862"/>
    <property type="gene ID" value="SDY_0674"/>
</dbReference>
<dbReference type="KEGG" id="sdy:SDY_0674"/>
<dbReference type="PATRIC" id="fig|300267.13.peg.787"/>
<dbReference type="HOGENOM" id="CLU_029922_0_0_6"/>
<dbReference type="UniPathway" id="UPA00561">
    <property type="reaction ID" value="UER00617"/>
</dbReference>
<dbReference type="Proteomes" id="UP000002716">
    <property type="component" value="Chromosome"/>
</dbReference>
<dbReference type="GO" id="GO:0031419">
    <property type="term" value="F:cobalamin binding"/>
    <property type="evidence" value="ECO:0007669"/>
    <property type="project" value="UniProtKB-KW"/>
</dbReference>
<dbReference type="GO" id="GO:0050097">
    <property type="term" value="F:methylaspartate mutase activity"/>
    <property type="evidence" value="ECO:0007669"/>
    <property type="project" value="UniProtKB-UniRule"/>
</dbReference>
<dbReference type="GO" id="GO:0019670">
    <property type="term" value="P:anaerobic glutamate catabolic process"/>
    <property type="evidence" value="ECO:0007669"/>
    <property type="project" value="InterPro"/>
</dbReference>
<dbReference type="GO" id="GO:0019553">
    <property type="term" value="P:glutamate catabolic process via L-citramalate"/>
    <property type="evidence" value="ECO:0007669"/>
    <property type="project" value="UniProtKB-UniRule"/>
</dbReference>
<dbReference type="CDD" id="cd00245">
    <property type="entry name" value="Glm_e"/>
    <property type="match status" value="1"/>
</dbReference>
<dbReference type="Gene3D" id="3.20.20.240">
    <property type="entry name" value="Methylmalonyl-CoA mutase"/>
    <property type="match status" value="1"/>
</dbReference>
<dbReference type="HAMAP" id="MF_01923">
    <property type="entry name" value="Me_Asp_mutase_E"/>
    <property type="match status" value="1"/>
</dbReference>
<dbReference type="InterPro" id="IPR016176">
    <property type="entry name" value="Cbl-dep_enz_cat"/>
</dbReference>
<dbReference type="InterPro" id="IPR006396">
    <property type="entry name" value="Glu_mut_E"/>
</dbReference>
<dbReference type="NCBIfam" id="TIGR01503">
    <property type="entry name" value="MthylAspMut_E"/>
    <property type="match status" value="1"/>
</dbReference>
<dbReference type="Pfam" id="PF06368">
    <property type="entry name" value="Met_asp_mut_E"/>
    <property type="match status" value="1"/>
</dbReference>
<dbReference type="PIRSF" id="PIRSF001495">
    <property type="entry name" value="Met_asp_mut_epsi"/>
    <property type="match status" value="1"/>
</dbReference>
<dbReference type="SUPFAM" id="SSF51703">
    <property type="entry name" value="Cobalamin (vitamin B12)-dependent enzymes"/>
    <property type="match status" value="1"/>
</dbReference>
<organism>
    <name type="scientific">Shigella dysenteriae serotype 1 (strain Sd197)</name>
    <dbReference type="NCBI Taxonomy" id="300267"/>
    <lineage>
        <taxon>Bacteria</taxon>
        <taxon>Pseudomonadati</taxon>
        <taxon>Pseudomonadota</taxon>
        <taxon>Gammaproteobacteria</taxon>
        <taxon>Enterobacterales</taxon>
        <taxon>Enterobacteriaceae</taxon>
        <taxon>Shigella</taxon>
    </lineage>
</organism>
<sequence>MELRNKKLTHDEFMTERQQVLKTWETGKNVENFEDGVKYQQAIPEHKRFSLALLKADKEGKTLSQPRAGVALMDEHIELLKTLQEECDLLPSTIDAYTRLNRYEEAAVGIKKSIEAGTSKLNGLPVVNHGVAACRRLTETLQKPLQIRHGTPDARLLAKISMASGFTSYEGGGISYNIPYAKRVTLEKSIRDWQYCDRLMGMYEEHGIRINREPFGPLTGTLIPPFISHSIAIIEGLLALEQSVKSITVGYGQVGSLTQDVAAIQSLRELAHEYFQSYGYTDYELSTVFHQWMGGFPEDESKAFAIISWGAAVAGMSGATKVITKSPHEAWGIPTAAANIQGLKASRQMLNMVNEQKFPPCPAVELEIELIKSEVRAVLNKVFELGNGDIARGTVLAFEAGVLEAGAVPLPKDILDLHHDYVAERARCEGRQPTFQMVVDDINAVSHSKLIGRP</sequence>
<protein>
    <recommendedName>
        <fullName evidence="1">Glutamate mutase epsilon subunit</fullName>
        <ecNumber evidence="1">5.4.99.1</ecNumber>
    </recommendedName>
    <alternativeName>
        <fullName evidence="1">Glutamate mutase E chain</fullName>
    </alternativeName>
    <alternativeName>
        <fullName evidence="1">Glutamate mutase large subunit</fullName>
    </alternativeName>
    <alternativeName>
        <fullName evidence="1">Methylaspartate mutase</fullName>
    </alternativeName>
</protein>
<keyword id="KW-0846">Cobalamin</keyword>
<keyword id="KW-0170">Cobalt</keyword>
<keyword id="KW-0413">Isomerase</keyword>
<keyword id="KW-1185">Reference proteome</keyword>